<feature type="chain" id="PRO_0000178806" description="Lipoprotein signal peptidase">
    <location>
        <begin position="1"/>
        <end position="223"/>
    </location>
</feature>
<feature type="transmembrane region" description="Helical" evidence="1">
    <location>
        <begin position="32"/>
        <end position="52"/>
    </location>
</feature>
<feature type="transmembrane region" description="Helical" evidence="1">
    <location>
        <begin position="65"/>
        <end position="85"/>
    </location>
</feature>
<feature type="transmembrane region" description="Helical" evidence="1">
    <location>
        <begin position="91"/>
        <end position="111"/>
    </location>
</feature>
<feature type="transmembrane region" description="Helical" evidence="1">
    <location>
        <begin position="116"/>
        <end position="136"/>
    </location>
</feature>
<feature type="transmembrane region" description="Helical" evidence="1">
    <location>
        <begin position="173"/>
        <end position="193"/>
    </location>
</feature>
<feature type="region of interest" description="Disordered" evidence="2">
    <location>
        <begin position="1"/>
        <end position="20"/>
    </location>
</feature>
<feature type="region of interest" description="Disordered" evidence="2">
    <location>
        <begin position="196"/>
        <end position="223"/>
    </location>
</feature>
<feature type="active site" evidence="1">
    <location>
        <position position="156"/>
    </location>
</feature>
<feature type="active site" evidence="1">
    <location>
        <position position="175"/>
    </location>
</feature>
<reference key="1">
    <citation type="journal article" date="2003" name="Proc. Natl. Acad. Sci. U.S.A.">
        <title>Complete genome sequence of the marine planctomycete Pirellula sp. strain 1.</title>
        <authorList>
            <person name="Gloeckner F.O."/>
            <person name="Kube M."/>
            <person name="Bauer M."/>
            <person name="Teeling H."/>
            <person name="Lombardot T."/>
            <person name="Ludwig W."/>
            <person name="Gade D."/>
            <person name="Beck A."/>
            <person name="Borzym K."/>
            <person name="Heitmann K."/>
            <person name="Rabus R."/>
            <person name="Schlesner H."/>
            <person name="Amann R."/>
            <person name="Reinhardt R."/>
        </authorList>
    </citation>
    <scope>NUCLEOTIDE SEQUENCE [LARGE SCALE GENOMIC DNA]</scope>
    <source>
        <strain>DSM 10527 / NCIMB 13988 / SH1</strain>
    </source>
</reference>
<keyword id="KW-0064">Aspartyl protease</keyword>
<keyword id="KW-0997">Cell inner membrane</keyword>
<keyword id="KW-1003">Cell membrane</keyword>
<keyword id="KW-0378">Hydrolase</keyword>
<keyword id="KW-0472">Membrane</keyword>
<keyword id="KW-0645">Protease</keyword>
<keyword id="KW-1185">Reference proteome</keyword>
<keyword id="KW-0812">Transmembrane</keyword>
<keyword id="KW-1133">Transmembrane helix</keyword>
<sequence>MNSAKVNPSGHAPTPAPTASQGAAFPANRYALFFGLAIAGGALDLWSKEAIFRWRGLPGTQDVYWIIEGYFGIETAVNIGAVFGLGAGQGLVFAAISVFAAAAIIAWLFFFKAARSCWLTFALGCITGGIIGNLYDRLGFWWKPGLPDQWQSGVRDWILWQASDQWKWPNFNIADSLLVTGAIMLLVQSFFFPPPPHGEADGNELPGRRAPDEPTEGTKPAAS</sequence>
<protein>
    <recommendedName>
        <fullName evidence="1">Lipoprotein signal peptidase</fullName>
        <ecNumber evidence="1">3.4.23.36</ecNumber>
    </recommendedName>
    <alternativeName>
        <fullName evidence="1">Prolipoprotein signal peptidase</fullName>
    </alternativeName>
    <alternativeName>
        <fullName evidence="1">Signal peptidase II</fullName>
        <shortName evidence="1">SPase II</shortName>
    </alternativeName>
</protein>
<gene>
    <name evidence="1" type="primary">lspA</name>
    <name type="ordered locus">RB10374</name>
</gene>
<name>LSPA_RHOBA</name>
<organism>
    <name type="scientific">Rhodopirellula baltica (strain DSM 10527 / NCIMB 13988 / SH1)</name>
    <dbReference type="NCBI Taxonomy" id="243090"/>
    <lineage>
        <taxon>Bacteria</taxon>
        <taxon>Pseudomonadati</taxon>
        <taxon>Planctomycetota</taxon>
        <taxon>Planctomycetia</taxon>
        <taxon>Pirellulales</taxon>
        <taxon>Pirellulaceae</taxon>
        <taxon>Rhodopirellula</taxon>
    </lineage>
</organism>
<evidence type="ECO:0000255" key="1">
    <source>
        <dbReference type="HAMAP-Rule" id="MF_00161"/>
    </source>
</evidence>
<evidence type="ECO:0000256" key="2">
    <source>
        <dbReference type="SAM" id="MobiDB-lite"/>
    </source>
</evidence>
<evidence type="ECO:0000305" key="3"/>
<dbReference type="EC" id="3.4.23.36" evidence="1"/>
<dbReference type="EMBL" id="BX294151">
    <property type="protein sequence ID" value="CAD78851.1"/>
    <property type="status" value="ALT_INIT"/>
    <property type="molecule type" value="Genomic_DNA"/>
</dbReference>
<dbReference type="RefSeq" id="NP_869394.1">
    <property type="nucleotide sequence ID" value="NC_005027.1"/>
</dbReference>
<dbReference type="RefSeq" id="WP_193427748.1">
    <property type="nucleotide sequence ID" value="NC_005027.1"/>
</dbReference>
<dbReference type="SMR" id="Q7UF32"/>
<dbReference type="FunCoup" id="Q7UF32">
    <property type="interactions" value="307"/>
</dbReference>
<dbReference type="STRING" id="243090.RB10374"/>
<dbReference type="TCDB" id="9.B.105.1.4">
    <property type="family name" value="the lead resistance fusion protein (pbrbc) family"/>
</dbReference>
<dbReference type="EnsemblBacteria" id="CAD78851">
    <property type="protein sequence ID" value="CAD78851"/>
    <property type="gene ID" value="RB10374"/>
</dbReference>
<dbReference type="KEGG" id="rba:RB10374"/>
<dbReference type="PATRIC" id="fig|243090.15.peg.5018"/>
<dbReference type="eggNOG" id="COG0597">
    <property type="taxonomic scope" value="Bacteria"/>
</dbReference>
<dbReference type="HOGENOM" id="CLU_1146482_0_0_0"/>
<dbReference type="InParanoid" id="Q7UF32"/>
<dbReference type="OrthoDB" id="9810259at2"/>
<dbReference type="UniPathway" id="UPA00665"/>
<dbReference type="Proteomes" id="UP000001025">
    <property type="component" value="Chromosome"/>
</dbReference>
<dbReference type="GO" id="GO:0005886">
    <property type="term" value="C:plasma membrane"/>
    <property type="evidence" value="ECO:0000318"/>
    <property type="project" value="GO_Central"/>
</dbReference>
<dbReference type="GO" id="GO:0004190">
    <property type="term" value="F:aspartic-type endopeptidase activity"/>
    <property type="evidence" value="ECO:0007669"/>
    <property type="project" value="UniProtKB-UniRule"/>
</dbReference>
<dbReference type="GO" id="GO:0004175">
    <property type="term" value="F:endopeptidase activity"/>
    <property type="evidence" value="ECO:0000318"/>
    <property type="project" value="GO_Central"/>
</dbReference>
<dbReference type="GO" id="GO:0006508">
    <property type="term" value="P:proteolysis"/>
    <property type="evidence" value="ECO:0007669"/>
    <property type="project" value="UniProtKB-KW"/>
</dbReference>
<dbReference type="HAMAP" id="MF_00161">
    <property type="entry name" value="LspA"/>
    <property type="match status" value="1"/>
</dbReference>
<dbReference type="InterPro" id="IPR001872">
    <property type="entry name" value="Peptidase_A8"/>
</dbReference>
<dbReference type="PANTHER" id="PTHR33695">
    <property type="entry name" value="LIPOPROTEIN SIGNAL PEPTIDASE"/>
    <property type="match status" value="1"/>
</dbReference>
<dbReference type="PANTHER" id="PTHR33695:SF1">
    <property type="entry name" value="LIPOPROTEIN SIGNAL PEPTIDASE"/>
    <property type="match status" value="1"/>
</dbReference>
<dbReference type="Pfam" id="PF01252">
    <property type="entry name" value="Peptidase_A8"/>
    <property type="match status" value="1"/>
</dbReference>
<dbReference type="PRINTS" id="PR00781">
    <property type="entry name" value="LIPOSIGPTASE"/>
</dbReference>
<accession>Q7UF32</accession>
<proteinExistence type="inferred from homology"/>
<comment type="function">
    <text evidence="1">This protein specifically catalyzes the removal of signal peptides from prolipoproteins.</text>
</comment>
<comment type="catalytic activity">
    <reaction evidence="1">
        <text>Release of signal peptides from bacterial membrane prolipoproteins. Hydrolyzes -Xaa-Yaa-Zaa-|-(S,diacylglyceryl)Cys-, in which Xaa is hydrophobic (preferably Leu), and Yaa (Ala or Ser) and Zaa (Gly or Ala) have small, neutral side chains.</text>
        <dbReference type="EC" id="3.4.23.36"/>
    </reaction>
</comment>
<comment type="pathway">
    <text evidence="1">Protein modification; lipoprotein biosynthesis (signal peptide cleavage).</text>
</comment>
<comment type="subcellular location">
    <subcellularLocation>
        <location evidence="1">Cell inner membrane</location>
        <topology evidence="1">Multi-pass membrane protein</topology>
    </subcellularLocation>
</comment>
<comment type="similarity">
    <text evidence="1">Belongs to the peptidase A8 family.</text>
</comment>
<comment type="sequence caution" evidence="3">
    <conflict type="erroneous initiation">
        <sequence resource="EMBL-CDS" id="CAD78851"/>
    </conflict>
</comment>